<name>RS19_SPIKU</name>
<protein>
    <recommendedName>
        <fullName evidence="1">Small ribosomal subunit protein uS19</fullName>
    </recommendedName>
    <alternativeName>
        <fullName evidence="3">30S ribosomal protein S19</fullName>
    </alternativeName>
</protein>
<organism>
    <name type="scientific">Spiroplasma kunkelii</name>
    <dbReference type="NCBI Taxonomy" id="47834"/>
    <lineage>
        <taxon>Bacteria</taxon>
        <taxon>Bacillati</taxon>
        <taxon>Mycoplasmatota</taxon>
        <taxon>Mollicutes</taxon>
        <taxon>Entomoplasmatales</taxon>
        <taxon>Spiroplasmataceae</taxon>
        <taxon>Spiroplasma</taxon>
    </lineage>
</organism>
<feature type="chain" id="PRO_0000129898" description="Small ribosomal subunit protein uS19">
    <location>
        <begin position="1"/>
        <end position="91"/>
    </location>
</feature>
<feature type="region of interest" description="Disordered" evidence="2">
    <location>
        <begin position="72"/>
        <end position="91"/>
    </location>
</feature>
<feature type="compositionally biased region" description="Basic and acidic residues" evidence="2">
    <location>
        <begin position="82"/>
        <end position="91"/>
    </location>
</feature>
<accession>Q6XYY2</accession>
<reference key="1">
    <citation type="journal article" date="2003" name="Mol. Genet. Genomics">
        <title>Gene content and organization of an 85-kb DNA segment from the genome of the phytopathogenic mollicute Spiroplasma kunkelii.</title>
        <authorList>
            <person name="Zhao Y."/>
            <person name="Hammond R.W."/>
            <person name="Jomantiene R."/>
            <person name="Dally E.L."/>
            <person name="Lee I.-M."/>
            <person name="Jia H."/>
            <person name="Wu H."/>
            <person name="Lin S."/>
            <person name="Zhang P."/>
            <person name="Kenton S."/>
            <person name="Najar F.Z."/>
            <person name="Hua A."/>
            <person name="Roe B.A."/>
            <person name="Fletcher J."/>
            <person name="Davis R.E."/>
        </authorList>
    </citation>
    <scope>NUCLEOTIDE SEQUENCE [GENOMIC DNA]</scope>
    <source>
        <strain>CR2-3x</strain>
    </source>
</reference>
<proteinExistence type="inferred from homology"/>
<sequence length="91" mass="10440">MSRSLKKGPFVDKYLQKKVEALNTANKKEVVKTWSRRSVIFPEFIGHTFAVHNGKEHIPVYVTEDMIGHKLGEFSPTRKFGGHGDDKKKKK</sequence>
<dbReference type="EMBL" id="AY198133">
    <property type="protein sequence ID" value="AAP58896.1"/>
    <property type="molecule type" value="Genomic_DNA"/>
</dbReference>
<dbReference type="SMR" id="Q6XYY2"/>
<dbReference type="GO" id="GO:0005737">
    <property type="term" value="C:cytoplasm"/>
    <property type="evidence" value="ECO:0007669"/>
    <property type="project" value="UniProtKB-ARBA"/>
</dbReference>
<dbReference type="GO" id="GO:0015935">
    <property type="term" value="C:small ribosomal subunit"/>
    <property type="evidence" value="ECO:0007669"/>
    <property type="project" value="InterPro"/>
</dbReference>
<dbReference type="GO" id="GO:0019843">
    <property type="term" value="F:rRNA binding"/>
    <property type="evidence" value="ECO:0007669"/>
    <property type="project" value="UniProtKB-UniRule"/>
</dbReference>
<dbReference type="GO" id="GO:0003735">
    <property type="term" value="F:structural constituent of ribosome"/>
    <property type="evidence" value="ECO:0007669"/>
    <property type="project" value="InterPro"/>
</dbReference>
<dbReference type="GO" id="GO:0000028">
    <property type="term" value="P:ribosomal small subunit assembly"/>
    <property type="evidence" value="ECO:0007669"/>
    <property type="project" value="TreeGrafter"/>
</dbReference>
<dbReference type="GO" id="GO:0006412">
    <property type="term" value="P:translation"/>
    <property type="evidence" value="ECO:0007669"/>
    <property type="project" value="UniProtKB-UniRule"/>
</dbReference>
<dbReference type="FunFam" id="3.30.860.10:FF:000001">
    <property type="entry name" value="30S ribosomal protein S19"/>
    <property type="match status" value="1"/>
</dbReference>
<dbReference type="Gene3D" id="3.30.860.10">
    <property type="entry name" value="30s Ribosomal Protein S19, Chain A"/>
    <property type="match status" value="1"/>
</dbReference>
<dbReference type="HAMAP" id="MF_00531">
    <property type="entry name" value="Ribosomal_uS19"/>
    <property type="match status" value="1"/>
</dbReference>
<dbReference type="InterPro" id="IPR002222">
    <property type="entry name" value="Ribosomal_uS19"/>
</dbReference>
<dbReference type="InterPro" id="IPR005732">
    <property type="entry name" value="Ribosomal_uS19_bac-type"/>
</dbReference>
<dbReference type="InterPro" id="IPR020934">
    <property type="entry name" value="Ribosomal_uS19_CS"/>
</dbReference>
<dbReference type="InterPro" id="IPR023575">
    <property type="entry name" value="Ribosomal_uS19_SF"/>
</dbReference>
<dbReference type="NCBIfam" id="TIGR01050">
    <property type="entry name" value="rpsS_bact"/>
    <property type="match status" value="1"/>
</dbReference>
<dbReference type="PANTHER" id="PTHR11880">
    <property type="entry name" value="RIBOSOMAL PROTEIN S19P FAMILY MEMBER"/>
    <property type="match status" value="1"/>
</dbReference>
<dbReference type="PANTHER" id="PTHR11880:SF8">
    <property type="entry name" value="SMALL RIBOSOMAL SUBUNIT PROTEIN US19M"/>
    <property type="match status" value="1"/>
</dbReference>
<dbReference type="Pfam" id="PF00203">
    <property type="entry name" value="Ribosomal_S19"/>
    <property type="match status" value="1"/>
</dbReference>
<dbReference type="PIRSF" id="PIRSF002144">
    <property type="entry name" value="Ribosomal_S19"/>
    <property type="match status" value="1"/>
</dbReference>
<dbReference type="PRINTS" id="PR00975">
    <property type="entry name" value="RIBOSOMALS19"/>
</dbReference>
<dbReference type="SUPFAM" id="SSF54570">
    <property type="entry name" value="Ribosomal protein S19"/>
    <property type="match status" value="1"/>
</dbReference>
<dbReference type="PROSITE" id="PS00323">
    <property type="entry name" value="RIBOSOMAL_S19"/>
    <property type="match status" value="1"/>
</dbReference>
<comment type="function">
    <text evidence="1">Protein S19 forms a complex with S13 that binds strongly to the 16S ribosomal RNA.</text>
</comment>
<comment type="similarity">
    <text evidence="1">Belongs to the universal ribosomal protein uS19 family.</text>
</comment>
<gene>
    <name evidence="1" type="primary">rpsS</name>
</gene>
<evidence type="ECO:0000255" key="1">
    <source>
        <dbReference type="HAMAP-Rule" id="MF_00531"/>
    </source>
</evidence>
<evidence type="ECO:0000256" key="2">
    <source>
        <dbReference type="SAM" id="MobiDB-lite"/>
    </source>
</evidence>
<evidence type="ECO:0000305" key="3"/>
<keyword id="KW-0687">Ribonucleoprotein</keyword>
<keyword id="KW-0689">Ribosomal protein</keyword>
<keyword id="KW-0694">RNA-binding</keyword>
<keyword id="KW-0699">rRNA-binding</keyword>